<name>KCNH8_HUMAN</name>
<dbReference type="EMBL" id="AY053503">
    <property type="protein sequence ID" value="AAL15429.1"/>
    <property type="molecule type" value="mRNA"/>
</dbReference>
<dbReference type="EMBL" id="AK294759">
    <property type="protein sequence ID" value="BAH11873.1"/>
    <property type="molecule type" value="mRNA"/>
</dbReference>
<dbReference type="EMBL" id="AC015542">
    <property type="status" value="NOT_ANNOTATED_CDS"/>
    <property type="molecule type" value="Genomic_DNA"/>
</dbReference>
<dbReference type="EMBL" id="AC061958">
    <property type="status" value="NOT_ANNOTATED_CDS"/>
    <property type="molecule type" value="Genomic_DNA"/>
</dbReference>
<dbReference type="EMBL" id="AC099538">
    <property type="status" value="NOT_ANNOTATED_CDS"/>
    <property type="molecule type" value="Genomic_DNA"/>
</dbReference>
<dbReference type="EMBL" id="AC116098">
    <property type="status" value="NOT_ANNOTATED_CDS"/>
    <property type="molecule type" value="Genomic_DNA"/>
</dbReference>
<dbReference type="EMBL" id="AC135452">
    <property type="status" value="NOT_ANNOTATED_CDS"/>
    <property type="molecule type" value="Genomic_DNA"/>
</dbReference>
<dbReference type="EMBL" id="AC138315">
    <property type="status" value="NOT_ANNOTATED_CDS"/>
    <property type="molecule type" value="Genomic_DNA"/>
</dbReference>
<dbReference type="EMBL" id="AB209053">
    <property type="protein sequence ID" value="BAD92290.1"/>
    <property type="molecule type" value="mRNA"/>
</dbReference>
<dbReference type="CCDS" id="CCDS2632.1">
    <molecule id="Q96L42-1"/>
</dbReference>
<dbReference type="RefSeq" id="NP_653234.2">
    <molecule id="Q96L42-1"/>
    <property type="nucleotide sequence ID" value="NM_144633.2"/>
</dbReference>
<dbReference type="SMR" id="Q96L42"/>
<dbReference type="BioGRID" id="126271">
    <property type="interactions" value="4"/>
</dbReference>
<dbReference type="CORUM" id="Q96L42"/>
<dbReference type="ELM" id="Q96L42"/>
<dbReference type="FunCoup" id="Q96L42">
    <property type="interactions" value="718"/>
</dbReference>
<dbReference type="IntAct" id="Q96L42">
    <property type="interactions" value="2"/>
</dbReference>
<dbReference type="STRING" id="9606.ENSP00000328813"/>
<dbReference type="ChEMBL" id="CHEMBL2362996"/>
<dbReference type="DrugBank" id="DB00228">
    <property type="generic name" value="Enflurane"/>
</dbReference>
<dbReference type="DrugBank" id="DB01110">
    <property type="generic name" value="Miconazole"/>
</dbReference>
<dbReference type="DrugBank" id="DB01069">
    <property type="generic name" value="Promethazine"/>
</dbReference>
<dbReference type="DrugCentral" id="Q96L42"/>
<dbReference type="GuidetoPHARMACOLOGY" id="575"/>
<dbReference type="GlyCosmos" id="Q96L42">
    <property type="glycosylation" value="2 sites, No reported glycans"/>
</dbReference>
<dbReference type="GlyGen" id="Q96L42">
    <property type="glycosylation" value="3 sites"/>
</dbReference>
<dbReference type="iPTMnet" id="Q96L42"/>
<dbReference type="PhosphoSitePlus" id="Q96L42"/>
<dbReference type="BioMuta" id="KCNH8"/>
<dbReference type="DMDM" id="229462927"/>
<dbReference type="MassIVE" id="Q96L42"/>
<dbReference type="PaxDb" id="9606-ENSP00000328813"/>
<dbReference type="PeptideAtlas" id="Q96L42"/>
<dbReference type="ProteomicsDB" id="77148">
    <molecule id="Q96L42-1"/>
</dbReference>
<dbReference type="Antibodypedia" id="11263">
    <property type="antibodies" value="79 antibodies from 18 providers"/>
</dbReference>
<dbReference type="DNASU" id="131096"/>
<dbReference type="Ensembl" id="ENST00000328405.7">
    <molecule id="Q96L42-1"/>
    <property type="protein sequence ID" value="ENSP00000328813.2"/>
    <property type="gene ID" value="ENSG00000183960.9"/>
</dbReference>
<dbReference type="GeneID" id="131096"/>
<dbReference type="KEGG" id="hsa:131096"/>
<dbReference type="MANE-Select" id="ENST00000328405.7">
    <property type="protein sequence ID" value="ENSP00000328813.2"/>
    <property type="RefSeq nucleotide sequence ID" value="NM_144633.3"/>
    <property type="RefSeq protein sequence ID" value="NP_653234.2"/>
</dbReference>
<dbReference type="UCSC" id="uc003cbk.2">
    <molecule id="Q96L42-1"/>
    <property type="organism name" value="human"/>
</dbReference>
<dbReference type="AGR" id="HGNC:18864"/>
<dbReference type="CTD" id="131096"/>
<dbReference type="DisGeNET" id="131096"/>
<dbReference type="GeneCards" id="KCNH8"/>
<dbReference type="HGNC" id="HGNC:18864">
    <property type="gene designation" value="KCNH8"/>
</dbReference>
<dbReference type="HPA" id="ENSG00000183960">
    <property type="expression patterns" value="Group enriched (brain, pituitary gland, retina)"/>
</dbReference>
<dbReference type="MalaCards" id="KCNH8"/>
<dbReference type="MIM" id="608260">
    <property type="type" value="gene"/>
</dbReference>
<dbReference type="neXtProt" id="NX_Q96L42"/>
<dbReference type="OpenTargets" id="ENSG00000183960"/>
<dbReference type="PharmGKB" id="PA38724"/>
<dbReference type="VEuPathDB" id="HostDB:ENSG00000183960"/>
<dbReference type="eggNOG" id="KOG0498">
    <property type="taxonomic scope" value="Eukaryota"/>
</dbReference>
<dbReference type="GeneTree" id="ENSGT00940000156869"/>
<dbReference type="HOGENOM" id="CLU_005746_6_0_1"/>
<dbReference type="InParanoid" id="Q96L42"/>
<dbReference type="OMA" id="SWDREGM"/>
<dbReference type="OrthoDB" id="432483at2759"/>
<dbReference type="PAN-GO" id="Q96L42">
    <property type="GO annotations" value="4 GO annotations based on evolutionary models"/>
</dbReference>
<dbReference type="PhylomeDB" id="Q96L42"/>
<dbReference type="TreeFam" id="TF313130"/>
<dbReference type="PathwayCommons" id="Q96L42"/>
<dbReference type="Reactome" id="R-HSA-1296072">
    <property type="pathway name" value="Voltage gated Potassium channels"/>
</dbReference>
<dbReference type="SignaLink" id="Q96L42"/>
<dbReference type="BioGRID-ORCS" id="131096">
    <property type="hits" value="12 hits in 1150 CRISPR screens"/>
</dbReference>
<dbReference type="ChiTaRS" id="KCNH8">
    <property type="organism name" value="human"/>
</dbReference>
<dbReference type="GeneWiki" id="KCNH8"/>
<dbReference type="GenomeRNAi" id="131096"/>
<dbReference type="Pharos" id="Q96L42">
    <property type="development level" value="Tclin"/>
</dbReference>
<dbReference type="PRO" id="PR:Q96L42"/>
<dbReference type="Proteomes" id="UP000005640">
    <property type="component" value="Chromosome 3"/>
</dbReference>
<dbReference type="RNAct" id="Q96L42">
    <property type="molecule type" value="protein"/>
</dbReference>
<dbReference type="Bgee" id="ENSG00000183960">
    <property type="expression patterns" value="Expressed in corpus callosum and 111 other cell types or tissues"/>
</dbReference>
<dbReference type="ExpressionAtlas" id="Q96L42">
    <property type="expression patterns" value="baseline and differential"/>
</dbReference>
<dbReference type="GO" id="GO:0034702">
    <property type="term" value="C:monoatomic ion channel complex"/>
    <property type="evidence" value="ECO:0007669"/>
    <property type="project" value="UniProtKB-KW"/>
</dbReference>
<dbReference type="GO" id="GO:0005886">
    <property type="term" value="C:plasma membrane"/>
    <property type="evidence" value="ECO:0000314"/>
    <property type="project" value="HPA"/>
</dbReference>
<dbReference type="GO" id="GO:0005251">
    <property type="term" value="F:delayed rectifier potassium channel activity"/>
    <property type="evidence" value="ECO:0000314"/>
    <property type="project" value="UniProtKB"/>
</dbReference>
<dbReference type="GO" id="GO:0005249">
    <property type="term" value="F:voltage-gated potassium channel activity"/>
    <property type="evidence" value="ECO:0000318"/>
    <property type="project" value="GO_Central"/>
</dbReference>
<dbReference type="GO" id="GO:0071805">
    <property type="term" value="P:potassium ion transmembrane transport"/>
    <property type="evidence" value="ECO:0000318"/>
    <property type="project" value="GO_Central"/>
</dbReference>
<dbReference type="GO" id="GO:0006813">
    <property type="term" value="P:potassium ion transport"/>
    <property type="evidence" value="ECO:0000314"/>
    <property type="project" value="UniProtKB"/>
</dbReference>
<dbReference type="GO" id="GO:0042391">
    <property type="term" value="P:regulation of membrane potential"/>
    <property type="evidence" value="ECO:0000318"/>
    <property type="project" value="GO_Central"/>
</dbReference>
<dbReference type="CDD" id="cd00038">
    <property type="entry name" value="CAP_ED"/>
    <property type="match status" value="1"/>
</dbReference>
<dbReference type="CDD" id="cd00130">
    <property type="entry name" value="PAS"/>
    <property type="match status" value="1"/>
</dbReference>
<dbReference type="FunFam" id="1.10.1200.260:FF:000002">
    <property type="entry name" value="Potassium voltage-gated channel subfamily H member 8"/>
    <property type="match status" value="1"/>
</dbReference>
<dbReference type="FunFam" id="3.30.450.20:FF:000118">
    <property type="entry name" value="Potassium voltage-gated channel subfamily H member 8"/>
    <property type="match status" value="1"/>
</dbReference>
<dbReference type="FunFam" id="2.60.120.10:FF:000014">
    <property type="entry name" value="Potassium voltage-gated channel, subfamily H (Eag-related), member 4"/>
    <property type="match status" value="1"/>
</dbReference>
<dbReference type="Gene3D" id="1.10.1200.260">
    <property type="match status" value="1"/>
</dbReference>
<dbReference type="Gene3D" id="1.10.287.70">
    <property type="match status" value="1"/>
</dbReference>
<dbReference type="Gene3D" id="2.60.120.10">
    <property type="entry name" value="Jelly Rolls"/>
    <property type="match status" value="1"/>
</dbReference>
<dbReference type="Gene3D" id="3.30.450.20">
    <property type="entry name" value="PAS domain"/>
    <property type="match status" value="1"/>
</dbReference>
<dbReference type="InterPro" id="IPR000595">
    <property type="entry name" value="cNMP-bd_dom"/>
</dbReference>
<dbReference type="InterPro" id="IPR018490">
    <property type="entry name" value="cNMP-bd_dom_sf"/>
</dbReference>
<dbReference type="InterPro" id="IPR005821">
    <property type="entry name" value="Ion_trans_dom"/>
</dbReference>
<dbReference type="InterPro" id="IPR003938">
    <property type="entry name" value="K_chnl_volt-dep_EAG/ELK/ERG"/>
</dbReference>
<dbReference type="InterPro" id="IPR003950">
    <property type="entry name" value="K_chnl_volt-dep_ELK"/>
</dbReference>
<dbReference type="InterPro" id="IPR050818">
    <property type="entry name" value="KCNH_animal-type"/>
</dbReference>
<dbReference type="InterPro" id="IPR001610">
    <property type="entry name" value="PAC"/>
</dbReference>
<dbReference type="InterPro" id="IPR000014">
    <property type="entry name" value="PAS"/>
</dbReference>
<dbReference type="InterPro" id="IPR000700">
    <property type="entry name" value="PAS-assoc_C"/>
</dbReference>
<dbReference type="InterPro" id="IPR035965">
    <property type="entry name" value="PAS-like_dom_sf"/>
</dbReference>
<dbReference type="InterPro" id="IPR014710">
    <property type="entry name" value="RmlC-like_jellyroll"/>
</dbReference>
<dbReference type="NCBIfam" id="TIGR00229">
    <property type="entry name" value="sensory_box"/>
    <property type="match status" value="1"/>
</dbReference>
<dbReference type="PANTHER" id="PTHR10217:SF380">
    <property type="entry name" value="POTASSIUM VOLTAGE-GATED CHANNEL SUBFAMILY H MEMBER 8"/>
    <property type="match status" value="1"/>
</dbReference>
<dbReference type="PANTHER" id="PTHR10217">
    <property type="entry name" value="VOLTAGE AND LIGAND GATED POTASSIUM CHANNEL"/>
    <property type="match status" value="1"/>
</dbReference>
<dbReference type="Pfam" id="PF00027">
    <property type="entry name" value="cNMP_binding"/>
    <property type="match status" value="1"/>
</dbReference>
<dbReference type="Pfam" id="PF00520">
    <property type="entry name" value="Ion_trans"/>
    <property type="match status" value="1"/>
</dbReference>
<dbReference type="Pfam" id="PF13426">
    <property type="entry name" value="PAS_9"/>
    <property type="match status" value="1"/>
</dbReference>
<dbReference type="PRINTS" id="PR01463">
    <property type="entry name" value="EAGCHANLFMLY"/>
</dbReference>
<dbReference type="PRINTS" id="PR01465">
    <property type="entry name" value="ELKCHANNEL"/>
</dbReference>
<dbReference type="SMART" id="SM00100">
    <property type="entry name" value="cNMP"/>
    <property type="match status" value="1"/>
</dbReference>
<dbReference type="SMART" id="SM00086">
    <property type="entry name" value="PAC"/>
    <property type="match status" value="1"/>
</dbReference>
<dbReference type="SUPFAM" id="SSF51206">
    <property type="entry name" value="cAMP-binding domain-like"/>
    <property type="match status" value="1"/>
</dbReference>
<dbReference type="SUPFAM" id="SSF55785">
    <property type="entry name" value="PYP-like sensor domain (PAS domain)"/>
    <property type="match status" value="1"/>
</dbReference>
<dbReference type="SUPFAM" id="SSF81324">
    <property type="entry name" value="Voltage-gated potassium channels"/>
    <property type="match status" value="1"/>
</dbReference>
<dbReference type="PROSITE" id="PS50042">
    <property type="entry name" value="CNMP_BINDING_3"/>
    <property type="match status" value="1"/>
</dbReference>
<dbReference type="PROSITE" id="PS50113">
    <property type="entry name" value="PAC"/>
    <property type="match status" value="1"/>
</dbReference>
<gene>
    <name evidence="12" type="primary">KCNH8</name>
</gene>
<evidence type="ECO:0000250" key="1"/>
<evidence type="ECO:0000250" key="2">
    <source>
        <dbReference type="UniProtKB" id="Q9QWS8"/>
    </source>
</evidence>
<evidence type="ECO:0000255" key="3"/>
<evidence type="ECO:0000255" key="4">
    <source>
        <dbReference type="PROSITE-ProRule" id="PRU00060"/>
    </source>
</evidence>
<evidence type="ECO:0000255" key="5">
    <source>
        <dbReference type="PROSITE-ProRule" id="PRU00141"/>
    </source>
</evidence>
<evidence type="ECO:0000256" key="6">
    <source>
        <dbReference type="SAM" id="MobiDB-lite"/>
    </source>
</evidence>
<evidence type="ECO:0000269" key="7">
    <source>
    </source>
</evidence>
<evidence type="ECO:0000269" key="8">
    <source>
    </source>
</evidence>
<evidence type="ECO:0000303" key="9">
    <source>
    </source>
</evidence>
<evidence type="ECO:0000303" key="10">
    <source>
    </source>
</evidence>
<evidence type="ECO:0000305" key="11"/>
<evidence type="ECO:0000312" key="12">
    <source>
        <dbReference type="HGNC" id="HGNC:18864"/>
    </source>
</evidence>
<feature type="chain" id="PRO_0000054018" description="Voltage-gated delayed rectifier potassium channel KCNH8">
    <location>
        <begin position="1"/>
        <end position="1107"/>
    </location>
</feature>
<feature type="topological domain" description="Cytoplasmic" evidence="3">
    <location>
        <begin position="1"/>
        <end position="225"/>
    </location>
</feature>
<feature type="transmembrane region" description="Helical; Name=Segment S1" evidence="3">
    <location>
        <begin position="226"/>
        <end position="246"/>
    </location>
</feature>
<feature type="topological domain" description="Extracellular" evidence="3">
    <location>
        <begin position="247"/>
        <end position="255"/>
    </location>
</feature>
<feature type="transmembrane region" description="Helical; Name=Segment S2" evidence="3">
    <location>
        <begin position="256"/>
        <end position="276"/>
    </location>
</feature>
<feature type="topological domain" description="Cytoplasmic" evidence="3">
    <location>
        <begin position="277"/>
        <end position="298"/>
    </location>
</feature>
<feature type="transmembrane region" description="Helical; Name=Segment S3" evidence="3">
    <location>
        <begin position="299"/>
        <end position="319"/>
    </location>
</feature>
<feature type="topological domain" description="Extracellular" evidence="3">
    <location>
        <begin position="320"/>
        <end position="327"/>
    </location>
</feature>
<feature type="transmembrane region" description="Helical; Voltage-sensor; Name=Segment S4" evidence="3">
    <location>
        <begin position="328"/>
        <end position="348"/>
    </location>
</feature>
<feature type="topological domain" description="Cytoplasmic" evidence="3">
    <location>
        <begin position="349"/>
        <end position="357"/>
    </location>
</feature>
<feature type="transmembrane region" description="Helical; Name=Segment S5" evidence="3">
    <location>
        <begin position="358"/>
        <end position="378"/>
    </location>
</feature>
<feature type="topological domain" description="Extracellular" evidence="3">
    <location>
        <begin position="379"/>
        <end position="419"/>
    </location>
</feature>
<feature type="intramembrane region" description="Pore-forming; Name=Segment H5" evidence="3">
    <location>
        <begin position="420"/>
        <end position="440"/>
    </location>
</feature>
<feature type="topological domain" description="Extracellular" evidence="3">
    <location>
        <begin position="441"/>
        <end position="448"/>
    </location>
</feature>
<feature type="transmembrane region" description="Helical; Name=Segment S6" evidence="3">
    <location>
        <begin position="449"/>
        <end position="469"/>
    </location>
</feature>
<feature type="topological domain" description="Cytoplasmic" evidence="3">
    <location>
        <begin position="470"/>
        <end position="1107"/>
    </location>
</feature>
<feature type="domain" description="PAS">
    <location>
        <begin position="18"/>
        <end position="90"/>
    </location>
</feature>
<feature type="domain" description="PAC" evidence="5">
    <location>
        <begin position="93"/>
        <end position="145"/>
    </location>
</feature>
<feature type="region of interest" description="cNMP-binding domain" evidence="4">
    <location>
        <begin position="551"/>
        <end position="668"/>
    </location>
</feature>
<feature type="region of interest" description="Disordered" evidence="6">
    <location>
        <begin position="686"/>
        <end position="742"/>
    </location>
</feature>
<feature type="region of interest" description="Disordered" evidence="6">
    <location>
        <begin position="764"/>
        <end position="791"/>
    </location>
</feature>
<feature type="region of interest" description="Disordered" evidence="6">
    <location>
        <begin position="818"/>
        <end position="847"/>
    </location>
</feature>
<feature type="region of interest" description="Disordered" evidence="6">
    <location>
        <begin position="961"/>
        <end position="989"/>
    </location>
</feature>
<feature type="short sequence motif" description="Selectivity filter" evidence="1">
    <location>
        <begin position="434"/>
        <end position="439"/>
    </location>
</feature>
<feature type="compositionally biased region" description="Polar residues" evidence="6">
    <location>
        <begin position="686"/>
        <end position="702"/>
    </location>
</feature>
<feature type="compositionally biased region" description="Acidic residues" evidence="6">
    <location>
        <begin position="710"/>
        <end position="724"/>
    </location>
</feature>
<feature type="compositionally biased region" description="Polar residues" evidence="6">
    <location>
        <begin position="961"/>
        <end position="972"/>
    </location>
</feature>
<feature type="glycosylation site" description="N-linked (GlcNAc...) asparagine" evidence="3">
    <location>
        <position position="320"/>
    </location>
</feature>
<feature type="glycosylation site" description="N-linked (GlcNAc...) asparagine" evidence="3">
    <location>
        <position position="409"/>
    </location>
</feature>
<feature type="splice variant" id="VSP_057036" description="In isoform 2." evidence="10">
    <location>
        <begin position="1"/>
        <end position="359"/>
    </location>
</feature>
<feature type="splice variant" id="VSP_057037" description="In isoform 2." evidence="10">
    <original>A</original>
    <variation>VSQFQVCPRPSWIICWFRNHFGFILLMTT</variation>
    <location>
        <position position="459"/>
    </location>
</feature>
<feature type="splice variant" id="VSP_057038" description="In isoform 2." evidence="10">
    <original>WS</original>
    <variation>CF</variation>
    <location>
        <begin position="515"/>
        <end position="516"/>
    </location>
</feature>
<feature type="splice variant" id="VSP_057039" description="In isoform 2." evidence="10">
    <location>
        <begin position="517"/>
        <end position="1107"/>
    </location>
</feature>
<feature type="sequence variant" id="VAR_055098" description="In dbSNP:rs33915638." evidence="7">
    <original>Q</original>
    <variation>R</variation>
    <location>
        <position position="893"/>
    </location>
</feature>
<feature type="sequence variant" id="VAR_055099" description="In dbSNP:rs35160416.">
    <original>E</original>
    <variation>Q</variation>
    <location>
        <position position="984"/>
    </location>
</feature>
<feature type="sequence conflict" description="In Ref. 4; BAD92290." evidence="11" ref="4">
    <original>E</original>
    <variation>Q</variation>
    <location>
        <position position="525"/>
    </location>
</feature>
<reference key="1">
    <citation type="journal article" date="2002" name="J. Biomol. Screen.">
        <title>A novel membrane potential-sensitive fluorescent dye improves cell-based assays for ion channels.</title>
        <authorList>
            <person name="Baxter D.F."/>
            <person name="Kirk M."/>
            <person name="Garcia A.F."/>
            <person name="Raimondi A."/>
            <person name="Holmqvist M.H."/>
            <person name="Flint K.K."/>
            <person name="Bojanic D."/>
            <person name="DiStefano P.S."/>
            <person name="Curtis R."/>
            <person name="Xie Y."/>
        </authorList>
    </citation>
    <scope>NUCLEOTIDE SEQUENCE [MRNA] (ISOFORM 1)</scope>
    <scope>FUNCTION</scope>
    <scope>TRANSPORTER ACTIVITY</scope>
    <scope>VARIANT ARG-893</scope>
    <source>
        <tissue>Brain</tissue>
    </source>
</reference>
<reference key="2">
    <citation type="journal article" date="2004" name="Nat. Genet.">
        <title>Complete sequencing and characterization of 21,243 full-length human cDNAs.</title>
        <authorList>
            <person name="Ota T."/>
            <person name="Suzuki Y."/>
            <person name="Nishikawa T."/>
            <person name="Otsuki T."/>
            <person name="Sugiyama T."/>
            <person name="Irie R."/>
            <person name="Wakamatsu A."/>
            <person name="Hayashi K."/>
            <person name="Sato H."/>
            <person name="Nagai K."/>
            <person name="Kimura K."/>
            <person name="Makita H."/>
            <person name="Sekine M."/>
            <person name="Obayashi M."/>
            <person name="Nishi T."/>
            <person name="Shibahara T."/>
            <person name="Tanaka T."/>
            <person name="Ishii S."/>
            <person name="Yamamoto J."/>
            <person name="Saito K."/>
            <person name="Kawai Y."/>
            <person name="Isono Y."/>
            <person name="Nakamura Y."/>
            <person name="Nagahari K."/>
            <person name="Murakami K."/>
            <person name="Yasuda T."/>
            <person name="Iwayanagi T."/>
            <person name="Wagatsuma M."/>
            <person name="Shiratori A."/>
            <person name="Sudo H."/>
            <person name="Hosoiri T."/>
            <person name="Kaku Y."/>
            <person name="Kodaira H."/>
            <person name="Kondo H."/>
            <person name="Sugawara M."/>
            <person name="Takahashi M."/>
            <person name="Kanda K."/>
            <person name="Yokoi T."/>
            <person name="Furuya T."/>
            <person name="Kikkawa E."/>
            <person name="Omura Y."/>
            <person name="Abe K."/>
            <person name="Kamihara K."/>
            <person name="Katsuta N."/>
            <person name="Sato K."/>
            <person name="Tanikawa M."/>
            <person name="Yamazaki M."/>
            <person name="Ninomiya K."/>
            <person name="Ishibashi T."/>
            <person name="Yamashita H."/>
            <person name="Murakawa K."/>
            <person name="Fujimori K."/>
            <person name="Tanai H."/>
            <person name="Kimata M."/>
            <person name="Watanabe M."/>
            <person name="Hiraoka S."/>
            <person name="Chiba Y."/>
            <person name="Ishida S."/>
            <person name="Ono Y."/>
            <person name="Takiguchi S."/>
            <person name="Watanabe S."/>
            <person name="Yosida M."/>
            <person name="Hotuta T."/>
            <person name="Kusano J."/>
            <person name="Kanehori K."/>
            <person name="Takahashi-Fujii A."/>
            <person name="Hara H."/>
            <person name="Tanase T.-O."/>
            <person name="Nomura Y."/>
            <person name="Togiya S."/>
            <person name="Komai F."/>
            <person name="Hara R."/>
            <person name="Takeuchi K."/>
            <person name="Arita M."/>
            <person name="Imose N."/>
            <person name="Musashino K."/>
            <person name="Yuuki H."/>
            <person name="Oshima A."/>
            <person name="Sasaki N."/>
            <person name="Aotsuka S."/>
            <person name="Yoshikawa Y."/>
            <person name="Matsunawa H."/>
            <person name="Ichihara T."/>
            <person name="Shiohata N."/>
            <person name="Sano S."/>
            <person name="Moriya S."/>
            <person name="Momiyama H."/>
            <person name="Satoh N."/>
            <person name="Takami S."/>
            <person name="Terashima Y."/>
            <person name="Suzuki O."/>
            <person name="Nakagawa S."/>
            <person name="Senoh A."/>
            <person name="Mizoguchi H."/>
            <person name="Goto Y."/>
            <person name="Shimizu F."/>
            <person name="Wakebe H."/>
            <person name="Hishigaki H."/>
            <person name="Watanabe T."/>
            <person name="Sugiyama A."/>
            <person name="Takemoto M."/>
            <person name="Kawakami B."/>
            <person name="Yamazaki M."/>
            <person name="Watanabe K."/>
            <person name="Kumagai A."/>
            <person name="Itakura S."/>
            <person name="Fukuzumi Y."/>
            <person name="Fujimori Y."/>
            <person name="Komiyama M."/>
            <person name="Tashiro H."/>
            <person name="Tanigami A."/>
            <person name="Fujiwara T."/>
            <person name="Ono T."/>
            <person name="Yamada K."/>
            <person name="Fujii Y."/>
            <person name="Ozaki K."/>
            <person name="Hirao M."/>
            <person name="Ohmori Y."/>
            <person name="Kawabata A."/>
            <person name="Hikiji T."/>
            <person name="Kobatake N."/>
            <person name="Inagaki H."/>
            <person name="Ikema Y."/>
            <person name="Okamoto S."/>
            <person name="Okitani R."/>
            <person name="Kawakami T."/>
            <person name="Noguchi S."/>
            <person name="Itoh T."/>
            <person name="Shigeta K."/>
            <person name="Senba T."/>
            <person name="Matsumura K."/>
            <person name="Nakajima Y."/>
            <person name="Mizuno T."/>
            <person name="Morinaga M."/>
            <person name="Sasaki M."/>
            <person name="Togashi T."/>
            <person name="Oyama M."/>
            <person name="Hata H."/>
            <person name="Watanabe M."/>
            <person name="Komatsu T."/>
            <person name="Mizushima-Sugano J."/>
            <person name="Satoh T."/>
            <person name="Shirai Y."/>
            <person name="Takahashi Y."/>
            <person name="Nakagawa K."/>
            <person name="Okumura K."/>
            <person name="Nagase T."/>
            <person name="Nomura N."/>
            <person name="Kikuchi H."/>
            <person name="Masuho Y."/>
            <person name="Yamashita R."/>
            <person name="Nakai K."/>
            <person name="Yada T."/>
            <person name="Nakamura Y."/>
            <person name="Ohara O."/>
            <person name="Isogai T."/>
            <person name="Sugano S."/>
        </authorList>
    </citation>
    <scope>NUCLEOTIDE SEQUENCE [LARGE SCALE MRNA] (ISOFORM 2)</scope>
    <source>
        <tissue>Brain</tissue>
    </source>
</reference>
<reference key="3">
    <citation type="journal article" date="2006" name="Nature">
        <title>The DNA sequence, annotation and analysis of human chromosome 3.</title>
        <authorList>
            <person name="Muzny D.M."/>
            <person name="Scherer S.E."/>
            <person name="Kaul R."/>
            <person name="Wang J."/>
            <person name="Yu J."/>
            <person name="Sudbrak R."/>
            <person name="Buhay C.J."/>
            <person name="Chen R."/>
            <person name="Cree A."/>
            <person name="Ding Y."/>
            <person name="Dugan-Rocha S."/>
            <person name="Gill R."/>
            <person name="Gunaratne P."/>
            <person name="Harris R.A."/>
            <person name="Hawes A.C."/>
            <person name="Hernandez J."/>
            <person name="Hodgson A.V."/>
            <person name="Hume J."/>
            <person name="Jackson A."/>
            <person name="Khan Z.M."/>
            <person name="Kovar-Smith C."/>
            <person name="Lewis L.R."/>
            <person name="Lozado R.J."/>
            <person name="Metzker M.L."/>
            <person name="Milosavljevic A."/>
            <person name="Miner G.R."/>
            <person name="Morgan M.B."/>
            <person name="Nazareth L.V."/>
            <person name="Scott G."/>
            <person name="Sodergren E."/>
            <person name="Song X.-Z."/>
            <person name="Steffen D."/>
            <person name="Wei S."/>
            <person name="Wheeler D.A."/>
            <person name="Wright M.W."/>
            <person name="Worley K.C."/>
            <person name="Yuan Y."/>
            <person name="Zhang Z."/>
            <person name="Adams C.Q."/>
            <person name="Ansari-Lari M.A."/>
            <person name="Ayele M."/>
            <person name="Brown M.J."/>
            <person name="Chen G."/>
            <person name="Chen Z."/>
            <person name="Clendenning J."/>
            <person name="Clerc-Blankenburg K.P."/>
            <person name="Chen R."/>
            <person name="Chen Z."/>
            <person name="Davis C."/>
            <person name="Delgado O."/>
            <person name="Dinh H.H."/>
            <person name="Dong W."/>
            <person name="Draper H."/>
            <person name="Ernst S."/>
            <person name="Fu G."/>
            <person name="Gonzalez-Garay M.L."/>
            <person name="Garcia D.K."/>
            <person name="Gillett W."/>
            <person name="Gu J."/>
            <person name="Hao B."/>
            <person name="Haugen E."/>
            <person name="Havlak P."/>
            <person name="He X."/>
            <person name="Hennig S."/>
            <person name="Hu S."/>
            <person name="Huang W."/>
            <person name="Jackson L.R."/>
            <person name="Jacob L.S."/>
            <person name="Kelly S.H."/>
            <person name="Kube M."/>
            <person name="Levy R."/>
            <person name="Li Z."/>
            <person name="Liu B."/>
            <person name="Liu J."/>
            <person name="Liu W."/>
            <person name="Lu J."/>
            <person name="Maheshwari M."/>
            <person name="Nguyen B.-V."/>
            <person name="Okwuonu G.O."/>
            <person name="Palmeiri A."/>
            <person name="Pasternak S."/>
            <person name="Perez L.M."/>
            <person name="Phelps K.A."/>
            <person name="Plopper F.J."/>
            <person name="Qiang B."/>
            <person name="Raymond C."/>
            <person name="Rodriguez R."/>
            <person name="Saenphimmachak C."/>
            <person name="Santibanez J."/>
            <person name="Shen H."/>
            <person name="Shen Y."/>
            <person name="Subramanian S."/>
            <person name="Tabor P.E."/>
            <person name="Verduzco D."/>
            <person name="Waldron L."/>
            <person name="Wang J."/>
            <person name="Wang J."/>
            <person name="Wang Q."/>
            <person name="Williams G.A."/>
            <person name="Wong G.K.-S."/>
            <person name="Yao Z."/>
            <person name="Zhang J."/>
            <person name="Zhang X."/>
            <person name="Zhao G."/>
            <person name="Zhou J."/>
            <person name="Zhou Y."/>
            <person name="Nelson D."/>
            <person name="Lehrach H."/>
            <person name="Reinhardt R."/>
            <person name="Naylor S.L."/>
            <person name="Yang H."/>
            <person name="Olson M."/>
            <person name="Weinstock G."/>
            <person name="Gibbs R.A."/>
        </authorList>
    </citation>
    <scope>NUCLEOTIDE SEQUENCE [LARGE SCALE GENOMIC DNA]</scope>
</reference>
<reference key="4">
    <citation type="submission" date="2005-03" db="EMBL/GenBank/DDBJ databases">
        <authorList>
            <person name="Totoki Y."/>
            <person name="Toyoda A."/>
            <person name="Takeda T."/>
            <person name="Sakaki Y."/>
            <person name="Tanaka A."/>
            <person name="Yokoyama S."/>
            <person name="Ohara O."/>
            <person name="Nagase T."/>
            <person name="Kikuno R.F."/>
        </authorList>
    </citation>
    <scope>NUCLEOTIDE SEQUENCE [LARGE SCALE MRNA] OF 525-1107 (ISOFORM 1)</scope>
    <source>
        <tissue>Brain</tissue>
    </source>
</reference>
<reference key="5">
    <citation type="journal article" date="2003" name="Am. J. Physiol.">
        <title>Distribution and functional properties of human KCNH8 (Elk1) potassium channels.</title>
        <authorList>
            <person name="Zou A."/>
            <person name="Lin Z."/>
            <person name="Humble M."/>
            <person name="Creech C.D."/>
            <person name="Wagoner P.K."/>
            <person name="Krafte D."/>
            <person name="Jegla T.J."/>
            <person name="Wickenden A.D."/>
        </authorList>
    </citation>
    <scope>TISSUE SPECIFICITY</scope>
</reference>
<organism>
    <name type="scientific">Homo sapiens</name>
    <name type="common">Human</name>
    <dbReference type="NCBI Taxonomy" id="9606"/>
    <lineage>
        <taxon>Eukaryota</taxon>
        <taxon>Metazoa</taxon>
        <taxon>Chordata</taxon>
        <taxon>Craniata</taxon>
        <taxon>Vertebrata</taxon>
        <taxon>Euteleostomi</taxon>
        <taxon>Mammalia</taxon>
        <taxon>Eutheria</taxon>
        <taxon>Euarchontoglires</taxon>
        <taxon>Primates</taxon>
        <taxon>Haplorrhini</taxon>
        <taxon>Catarrhini</taxon>
        <taxon>Hominidae</taxon>
        <taxon>Homo</taxon>
    </lineage>
</organism>
<sequence>MPVMKGLLAPQNTFLDTIATRFDGTHSNFILANAQVAKGFPIVYCSDGFCELAGFARTEVMQKSCSCKFLFGVETNEQLMLQIEKSLEEKTEFKGEIMFYKKNGSPFWCLLDIVPIKNEKGDVVLFLASFKDITDTKVKITPEDKKEDKVKGRSRAGTHFDSARRRSRAVLYHISGHLQRREKNKLKINNNVFVDKPAFPEYKVSDAKKSKFILLHFSTFKAGWDWLILLATFYVAVTVPYNVCFIGNDDLSTTRSTTVSDIAVEILFIIDIILNFRTTYVSKSGQVIFEARSICIHYVTTWFIIDLIAALPFDLLYAFNVTVVSLVHLLKTVRLLRLLRLLQKLDRYSQHSTIVLTLLMSMFALLAHWMACIWYVIGKMEREDNSLLKWEVGWLHELGKRLESPYYGNNTLGGPSIRSAYIAALYFTLSSLTSVGFGNVSANTDAEKIFSICTMLIGALMHALVFGNVTAIIQRMYSRWSLYHTRTKDLKDFIRVHHLPQQLKQRMLEYFQTTWSVNNGIDSNELLKDFPDELRSDITMHLNKEILQLSLFECASRGCLRSLSLHIKTSFCAPGEYLLRQGDALQAIYFVCSGSMEVLKDSMVLAILGKGDLIGANLSIKDQVIKTNADVKALTYCDLQCIILKGLFEVLDLYPEYAHKFVEDIQHDLTYNLREGHESDVISRLSNKSMVSQSEPKGNGNINKRLPSIVEDEEEEEEGEEEEAVSLSPICTRGSSSRNKKVGSNKAYLGLSLKQLASGTVPFHSPIRVSRSNSPKTKQEIDPPNHNKRKEKNLKLQLSTLNNAGPPDLSPRIVDGIEDGNSSEESQTFDFGSERIRSEPRISPPLGDPEIGAAVLFIKAEETKQQINKLNSEVTTLTQEVSQLGKDMRNVIQLLENVLSPQQPSRFCSLHSTSVCPSRESLQTRTSWSAHQPCLHLQTGGAAYTQAQLCSSNITSDIWSVDPSSVGSSPQRTGAHEQNPADSELYHSPSLDYSPSHYQVVQEGHLQFLRCISPHSDSTLTPLQSISATLSSSVCSSSETSLHLVLPSRSEEGSFSQGTVSSFSLENLPGSWNQEGMASASTKPLENLPLEVVTSTAEVKDNKAINV</sequence>
<accession>Q96L42</accession>
<accession>B7Z2I7</accession>
<accession>Q59GQ6</accession>
<protein>
    <recommendedName>
        <fullName evidence="11">Voltage-gated delayed rectifier potassium channel KCNH8</fullName>
    </recommendedName>
    <alternativeName>
        <fullName>ELK1</fullName>
        <shortName evidence="9">hElk-1</shortName>
    </alternativeName>
    <alternativeName>
        <fullName>Ether-a-go-go-like potassium channel 3</fullName>
        <shortName>ELK channel 3</shortName>
        <shortName>ELK3</shortName>
    </alternativeName>
    <alternativeName>
        <fullName>Potassium voltage-gated channel subfamily H member 8</fullName>
    </alternativeName>
    <alternativeName>
        <fullName>Voltage-gated potassium channel subunit Kv12.1</fullName>
    </alternativeName>
</protein>
<comment type="function">
    <text evidence="2 7">Pore-forming (alpha) subunit of a voltage-gated delayed rectifier potassium channel that mediates outward-rectifying potassium currents (PubMed:11897058). Elicits a slowly activating, non-inactivating and slowly deactivation outwards potassium current at depolarizating voltages from -30 mV to +50mV (PubMed:11897058). Shows no obvious change in the activation rate from different holding potentials. Activation is strongly dependent on the pH of the external solution (By similarity).</text>
</comment>
<comment type="catalytic activity">
    <reaction evidence="7">
        <text>K(+)(in) = K(+)(out)</text>
        <dbReference type="Rhea" id="RHEA:29463"/>
        <dbReference type="ChEBI" id="CHEBI:29103"/>
    </reaction>
</comment>
<comment type="subunit">
    <text evidence="2">The potassium channel is probably composed of a homo- or heterotetrameric complex of pore-forming alpha subunits that can associate with modulating beta subunits.</text>
</comment>
<comment type="subcellular location">
    <subcellularLocation>
        <location evidence="3">Membrane</location>
        <topology evidence="3">Multi-pass membrane protein</topology>
    </subcellularLocation>
</comment>
<comment type="alternative products">
    <event type="alternative splicing"/>
    <isoform>
        <id>Q96L42-1</id>
        <name>1</name>
        <sequence type="displayed"/>
    </isoform>
    <isoform>
        <id>Q96L42-2</id>
        <name>2</name>
        <sequence type="described" ref="VSP_057036 VSP_057037 VSP_057038 VSP_057039"/>
    </isoform>
</comment>
<comment type="tissue specificity">
    <text evidence="8">Primarily expressed in the nervous system.</text>
</comment>
<comment type="similarity">
    <text evidence="11">Belongs to the potassium channel family. H (Eag) (TC 1.A.1.20) subfamily. Kv12.1/KCNH8 sub-subfamily.</text>
</comment>
<proteinExistence type="evidence at protein level"/>
<keyword id="KW-0025">Alternative splicing</keyword>
<keyword id="KW-0325">Glycoprotein</keyword>
<keyword id="KW-0407">Ion channel</keyword>
<keyword id="KW-0406">Ion transport</keyword>
<keyword id="KW-0472">Membrane</keyword>
<keyword id="KW-0630">Potassium</keyword>
<keyword id="KW-0631">Potassium channel</keyword>
<keyword id="KW-0633">Potassium transport</keyword>
<keyword id="KW-1267">Proteomics identification</keyword>
<keyword id="KW-1185">Reference proteome</keyword>
<keyword id="KW-0812">Transmembrane</keyword>
<keyword id="KW-1133">Transmembrane helix</keyword>
<keyword id="KW-0813">Transport</keyword>
<keyword id="KW-0851">Voltage-gated channel</keyword>